<protein>
    <recommendedName>
        <fullName evidence="1">ATP synthase subunit a</fullName>
    </recommendedName>
    <alternativeName>
        <fullName evidence="1">ATP synthase F0 sector subunit a</fullName>
    </alternativeName>
    <alternativeName>
        <fullName evidence="1">F-ATPase subunit 6</fullName>
    </alternativeName>
</protein>
<accession>Q72DL1</accession>
<dbReference type="EMBL" id="AE017285">
    <property type="protein sequence ID" value="AAS95398.1"/>
    <property type="molecule type" value="Genomic_DNA"/>
</dbReference>
<dbReference type="RefSeq" id="WP_010938217.1">
    <property type="nucleotide sequence ID" value="NC_002937.3"/>
</dbReference>
<dbReference type="RefSeq" id="YP_010139.1">
    <property type="nucleotide sequence ID" value="NC_002937.3"/>
</dbReference>
<dbReference type="SMR" id="Q72DL1"/>
<dbReference type="STRING" id="882.DVU_0918"/>
<dbReference type="PaxDb" id="882-DVU_0918"/>
<dbReference type="EnsemblBacteria" id="AAS95398">
    <property type="protein sequence ID" value="AAS95398"/>
    <property type="gene ID" value="DVU_0918"/>
</dbReference>
<dbReference type="KEGG" id="dvu:DVU_0918"/>
<dbReference type="PATRIC" id="fig|882.5.peg.861"/>
<dbReference type="eggNOG" id="COG0356">
    <property type="taxonomic scope" value="Bacteria"/>
</dbReference>
<dbReference type="HOGENOM" id="CLU_041018_2_2_7"/>
<dbReference type="OrthoDB" id="9789241at2"/>
<dbReference type="PhylomeDB" id="Q72DL1"/>
<dbReference type="Proteomes" id="UP000002194">
    <property type="component" value="Chromosome"/>
</dbReference>
<dbReference type="GO" id="GO:0005886">
    <property type="term" value="C:plasma membrane"/>
    <property type="evidence" value="ECO:0007669"/>
    <property type="project" value="UniProtKB-SubCell"/>
</dbReference>
<dbReference type="GO" id="GO:0045259">
    <property type="term" value="C:proton-transporting ATP synthase complex"/>
    <property type="evidence" value="ECO:0007669"/>
    <property type="project" value="UniProtKB-KW"/>
</dbReference>
<dbReference type="GO" id="GO:0046933">
    <property type="term" value="F:proton-transporting ATP synthase activity, rotational mechanism"/>
    <property type="evidence" value="ECO:0007669"/>
    <property type="project" value="UniProtKB-UniRule"/>
</dbReference>
<dbReference type="GO" id="GO:0042777">
    <property type="term" value="P:proton motive force-driven plasma membrane ATP synthesis"/>
    <property type="evidence" value="ECO:0007669"/>
    <property type="project" value="TreeGrafter"/>
</dbReference>
<dbReference type="CDD" id="cd00310">
    <property type="entry name" value="ATP-synt_Fo_a_6"/>
    <property type="match status" value="1"/>
</dbReference>
<dbReference type="Gene3D" id="1.20.120.220">
    <property type="entry name" value="ATP synthase, F0 complex, subunit A"/>
    <property type="match status" value="1"/>
</dbReference>
<dbReference type="HAMAP" id="MF_01393">
    <property type="entry name" value="ATP_synth_a_bact"/>
    <property type="match status" value="1"/>
</dbReference>
<dbReference type="InterPro" id="IPR045082">
    <property type="entry name" value="ATP_syn_F0_a_bact/chloroplast"/>
</dbReference>
<dbReference type="InterPro" id="IPR000568">
    <property type="entry name" value="ATP_synth_F0_asu"/>
</dbReference>
<dbReference type="InterPro" id="IPR023011">
    <property type="entry name" value="ATP_synth_F0_asu_AS"/>
</dbReference>
<dbReference type="InterPro" id="IPR035908">
    <property type="entry name" value="F0_ATP_A_sf"/>
</dbReference>
<dbReference type="NCBIfam" id="TIGR01131">
    <property type="entry name" value="ATP_synt_6_or_A"/>
    <property type="match status" value="1"/>
</dbReference>
<dbReference type="PANTHER" id="PTHR42823">
    <property type="entry name" value="ATP SYNTHASE SUBUNIT A, CHLOROPLASTIC"/>
    <property type="match status" value="1"/>
</dbReference>
<dbReference type="PANTHER" id="PTHR42823:SF3">
    <property type="entry name" value="ATP SYNTHASE SUBUNIT A, CHLOROPLASTIC"/>
    <property type="match status" value="1"/>
</dbReference>
<dbReference type="Pfam" id="PF00119">
    <property type="entry name" value="ATP-synt_A"/>
    <property type="match status" value="1"/>
</dbReference>
<dbReference type="PRINTS" id="PR00123">
    <property type="entry name" value="ATPASEA"/>
</dbReference>
<dbReference type="SUPFAM" id="SSF81336">
    <property type="entry name" value="F1F0 ATP synthase subunit A"/>
    <property type="match status" value="1"/>
</dbReference>
<dbReference type="PROSITE" id="PS00449">
    <property type="entry name" value="ATPASE_A"/>
    <property type="match status" value="1"/>
</dbReference>
<evidence type="ECO:0000255" key="1">
    <source>
        <dbReference type="HAMAP-Rule" id="MF_01393"/>
    </source>
</evidence>
<sequence>MAGGLPHPVLWSTLLNVDTITIGGATVEFKHVFYTWCAMAILFSLGLIVRSSLKVVPGALQNVFEVVIGGLEDFVVGNIGEDGRKVFPLLGGIFLFILFQNLLGLVPGCDAPTANVNTNAAMALFVFGYYNYQGLKRWGPGYIKHFMGPMTWLTPLMLPLEIISHCARPLSLTLRLFGNIRGEEIVMVLFFLMAPIVGTLPVYFLFLLGKVLQAFIFFMLTMVYLKGAFEHAH</sequence>
<organism>
    <name type="scientific">Nitratidesulfovibrio vulgaris (strain ATCC 29579 / DSM 644 / CCUG 34227 / NCIMB 8303 / VKM B-1760 / Hildenborough)</name>
    <name type="common">Desulfovibrio vulgaris</name>
    <dbReference type="NCBI Taxonomy" id="882"/>
    <lineage>
        <taxon>Bacteria</taxon>
        <taxon>Pseudomonadati</taxon>
        <taxon>Thermodesulfobacteriota</taxon>
        <taxon>Desulfovibrionia</taxon>
        <taxon>Desulfovibrionales</taxon>
        <taxon>Desulfovibrionaceae</taxon>
        <taxon>Nitratidesulfovibrio</taxon>
    </lineage>
</organism>
<comment type="function">
    <text evidence="1">Key component of the proton channel; it plays a direct role in the translocation of protons across the membrane.</text>
</comment>
<comment type="subunit">
    <text evidence="1">F-type ATPases have 2 components, CF(1) - the catalytic core - and CF(0) - the membrane proton channel. CF(1) has five subunits: alpha(3), beta(3), gamma(1), delta(1), epsilon(1). CF(0) has three main subunits: a(1), b(2) and c(9-12). The alpha and beta chains form an alternating ring which encloses part of the gamma chain. CF(1) is attached to CF(0) by a central stalk formed by the gamma and epsilon chains, while a peripheral stalk is formed by the delta and b chains.</text>
</comment>
<comment type="subcellular location">
    <subcellularLocation>
        <location evidence="1">Cell inner membrane</location>
        <topology evidence="1">Multi-pass membrane protein</topology>
    </subcellularLocation>
</comment>
<comment type="similarity">
    <text evidence="1">Belongs to the ATPase A chain family.</text>
</comment>
<gene>
    <name evidence="1" type="primary">atpB</name>
    <name type="ordered locus">DVU_0918</name>
</gene>
<proteinExistence type="inferred from homology"/>
<name>ATP6_NITV2</name>
<reference key="1">
    <citation type="journal article" date="2004" name="Nat. Biotechnol.">
        <title>The genome sequence of the anaerobic, sulfate-reducing bacterium Desulfovibrio vulgaris Hildenborough.</title>
        <authorList>
            <person name="Heidelberg J.F."/>
            <person name="Seshadri R."/>
            <person name="Haveman S.A."/>
            <person name="Hemme C.L."/>
            <person name="Paulsen I.T."/>
            <person name="Kolonay J.F."/>
            <person name="Eisen J.A."/>
            <person name="Ward N.L."/>
            <person name="Methe B.A."/>
            <person name="Brinkac L.M."/>
            <person name="Daugherty S.C."/>
            <person name="DeBoy R.T."/>
            <person name="Dodson R.J."/>
            <person name="Durkin A.S."/>
            <person name="Madupu R."/>
            <person name="Nelson W.C."/>
            <person name="Sullivan S.A."/>
            <person name="Fouts D.E."/>
            <person name="Haft D.H."/>
            <person name="Selengut J."/>
            <person name="Peterson J.D."/>
            <person name="Davidsen T.M."/>
            <person name="Zafar N."/>
            <person name="Zhou L."/>
            <person name="Radune D."/>
            <person name="Dimitrov G."/>
            <person name="Hance M."/>
            <person name="Tran K."/>
            <person name="Khouri H.M."/>
            <person name="Gill J."/>
            <person name="Utterback T.R."/>
            <person name="Feldblyum T.V."/>
            <person name="Wall J.D."/>
            <person name="Voordouw G."/>
            <person name="Fraser C.M."/>
        </authorList>
    </citation>
    <scope>NUCLEOTIDE SEQUENCE [LARGE SCALE GENOMIC DNA]</scope>
    <source>
        <strain>ATCC 29579 / DSM 644 / CCUG 34227 / NCIMB 8303 / VKM B-1760 / Hildenborough</strain>
    </source>
</reference>
<keyword id="KW-0066">ATP synthesis</keyword>
<keyword id="KW-0997">Cell inner membrane</keyword>
<keyword id="KW-1003">Cell membrane</keyword>
<keyword id="KW-0138">CF(0)</keyword>
<keyword id="KW-0375">Hydrogen ion transport</keyword>
<keyword id="KW-0406">Ion transport</keyword>
<keyword id="KW-0472">Membrane</keyword>
<keyword id="KW-1185">Reference proteome</keyword>
<keyword id="KW-0812">Transmembrane</keyword>
<keyword id="KW-1133">Transmembrane helix</keyword>
<keyword id="KW-0813">Transport</keyword>
<feature type="chain" id="PRO_0000362286" description="ATP synthase subunit a">
    <location>
        <begin position="1"/>
        <end position="233"/>
    </location>
</feature>
<feature type="transmembrane region" description="Helical" evidence="1">
    <location>
        <begin position="29"/>
        <end position="49"/>
    </location>
</feature>
<feature type="transmembrane region" description="Helical" evidence="1">
    <location>
        <begin position="86"/>
        <end position="106"/>
    </location>
</feature>
<feature type="transmembrane region" description="Helical" evidence="1">
    <location>
        <begin position="118"/>
        <end position="135"/>
    </location>
</feature>
<feature type="transmembrane region" description="Helical" evidence="1">
    <location>
        <begin position="188"/>
        <end position="208"/>
    </location>
</feature>
<feature type="transmembrane region" description="Helical" evidence="1">
    <location>
        <begin position="209"/>
        <end position="229"/>
    </location>
</feature>